<gene>
    <name type="primary">CSF2</name>
    <name type="synonym">GMCSF</name>
</gene>
<dbReference type="EMBL" id="M13207">
    <property type="protein sequence ID" value="AAA98768.1"/>
    <property type="molecule type" value="Genomic_DNA"/>
</dbReference>
<dbReference type="EMBL" id="M11734">
    <property type="protein sequence ID" value="AAA52122.1"/>
    <property type="molecule type" value="mRNA"/>
</dbReference>
<dbReference type="EMBL" id="M11220">
    <property type="protein sequence ID" value="AAA52578.1"/>
    <property type="molecule type" value="mRNA"/>
</dbReference>
<dbReference type="EMBL" id="X03021">
    <property type="protein sequence ID" value="CAA26822.1"/>
    <property type="molecule type" value="Genomic_DNA"/>
</dbReference>
<dbReference type="EMBL" id="M10663">
    <property type="protein sequence ID" value="AAA52121.1"/>
    <property type="molecule type" value="mRNA"/>
</dbReference>
<dbReference type="EMBL" id="AF373868">
    <property type="protein sequence ID" value="AAK51563.1"/>
    <property type="molecule type" value="Genomic_DNA"/>
</dbReference>
<dbReference type="EMBL" id="AC004511">
    <property type="protein sequence ID" value="AAC08707.1"/>
    <property type="molecule type" value="Genomic_DNA"/>
</dbReference>
<dbReference type="EMBL" id="BC108724">
    <property type="protein sequence ID" value="AAI08725.1"/>
    <property type="molecule type" value="mRNA"/>
</dbReference>
<dbReference type="EMBL" id="BC113924">
    <property type="protein sequence ID" value="AAI13925.1"/>
    <property type="molecule type" value="mRNA"/>
</dbReference>
<dbReference type="EMBL" id="BC113999">
    <property type="protein sequence ID" value="AAI14000.1"/>
    <property type="molecule type" value="mRNA"/>
</dbReference>
<dbReference type="EMBL" id="AF510855">
    <property type="protein sequence ID" value="AAM44054.1"/>
    <property type="molecule type" value="mRNA"/>
</dbReference>
<dbReference type="CCDS" id="CCDS4150.1"/>
<dbReference type="PIR" id="C24636">
    <property type="entry name" value="FQHUGM"/>
</dbReference>
<dbReference type="RefSeq" id="NP_000749.2">
    <property type="nucleotide sequence ID" value="NM_000758.3"/>
</dbReference>
<dbReference type="PDB" id="1CSG">
    <property type="method" value="X-ray"/>
    <property type="resolution" value="2.70 A"/>
    <property type="chains" value="A/B=18-144"/>
</dbReference>
<dbReference type="PDB" id="2GMF">
    <property type="method" value="X-ray"/>
    <property type="resolution" value="2.40 A"/>
    <property type="chains" value="A/B=18-144"/>
</dbReference>
<dbReference type="PDB" id="4NKQ">
    <property type="method" value="X-ray"/>
    <property type="resolution" value="3.30 A"/>
    <property type="chains" value="C=18-144"/>
</dbReference>
<dbReference type="PDB" id="4RS1">
    <property type="method" value="X-ray"/>
    <property type="resolution" value="2.68 A"/>
    <property type="chains" value="A=31-142"/>
</dbReference>
<dbReference type="PDB" id="5C7X">
    <property type="method" value="X-ray"/>
    <property type="resolution" value="2.95 A"/>
    <property type="chains" value="A/B=18-144"/>
</dbReference>
<dbReference type="PDB" id="5D70">
    <property type="method" value="X-ray"/>
    <property type="resolution" value="2.06 A"/>
    <property type="chains" value="A=18-144"/>
</dbReference>
<dbReference type="PDB" id="5D71">
    <property type="method" value="X-ray"/>
    <property type="resolution" value="2.25 A"/>
    <property type="chains" value="A=1-127"/>
</dbReference>
<dbReference type="PDB" id="5D72">
    <property type="method" value="X-ray"/>
    <property type="resolution" value="2.60 A"/>
    <property type="chains" value="A/B=1-127"/>
</dbReference>
<dbReference type="PDB" id="6BFQ">
    <property type="method" value="X-ray"/>
    <property type="resolution" value="2.60 A"/>
    <property type="chains" value="G/I/J/K=18-144"/>
</dbReference>
<dbReference type="PDB" id="6BFS">
    <property type="method" value="X-ray"/>
    <property type="resolution" value="2.00 A"/>
    <property type="chains" value="C=18-144"/>
</dbReference>
<dbReference type="PDBsum" id="1CSG"/>
<dbReference type="PDBsum" id="2GMF"/>
<dbReference type="PDBsum" id="4NKQ"/>
<dbReference type="PDBsum" id="4RS1"/>
<dbReference type="PDBsum" id="5C7X"/>
<dbReference type="PDBsum" id="5D70"/>
<dbReference type="PDBsum" id="5D71"/>
<dbReference type="PDBsum" id="5D72"/>
<dbReference type="PDBsum" id="6BFQ"/>
<dbReference type="PDBsum" id="6BFS"/>
<dbReference type="BMRB" id="P04141"/>
<dbReference type="EMDB" id="EMD-41368"/>
<dbReference type="SMR" id="P04141"/>
<dbReference type="BioGRID" id="107824">
    <property type="interactions" value="15"/>
</dbReference>
<dbReference type="ComplexPortal" id="CPX-512">
    <property type="entry name" value="Granulocyte-macrophage colony-stimulating factor-receptor complex"/>
</dbReference>
<dbReference type="CORUM" id="P04141"/>
<dbReference type="DIP" id="DIP-386N"/>
<dbReference type="FunCoup" id="P04141">
    <property type="interactions" value="673"/>
</dbReference>
<dbReference type="IntAct" id="P04141">
    <property type="interactions" value="7"/>
</dbReference>
<dbReference type="STRING" id="9606.ENSP00000296871"/>
<dbReference type="BindingDB" id="P04141"/>
<dbReference type="ChEMBL" id="CHEMBL3712955"/>
<dbReference type="DrugBank" id="DB05194">
    <property type="generic name" value="KB002"/>
</dbReference>
<dbReference type="DrugBank" id="DB13896">
    <property type="generic name" value="Talimogene laherparepvec"/>
</dbReference>
<dbReference type="GlyCosmos" id="P04141">
    <property type="glycosylation" value="6 sites, No reported glycans"/>
</dbReference>
<dbReference type="GlyGen" id="P04141">
    <property type="glycosylation" value="10 sites, 1 O-linked glycan (1 site)"/>
</dbReference>
<dbReference type="iPTMnet" id="P04141"/>
<dbReference type="PhosphoSitePlus" id="P04141"/>
<dbReference type="BioMuta" id="CSF2"/>
<dbReference type="DMDM" id="117561"/>
<dbReference type="MassIVE" id="P04141"/>
<dbReference type="PaxDb" id="9606-ENSP00000296871"/>
<dbReference type="PeptideAtlas" id="P04141"/>
<dbReference type="ProteomicsDB" id="51656"/>
<dbReference type="ABCD" id="P04141">
    <property type="antibodies" value="51 sequenced antibodies"/>
</dbReference>
<dbReference type="Antibodypedia" id="14363">
    <property type="antibodies" value="2004 antibodies from 52 providers"/>
</dbReference>
<dbReference type="DNASU" id="1437"/>
<dbReference type="Ensembl" id="ENST00000296871.4">
    <property type="protein sequence ID" value="ENSP00000296871.2"/>
    <property type="gene ID" value="ENSG00000164400.6"/>
</dbReference>
<dbReference type="GeneID" id="1437"/>
<dbReference type="KEGG" id="hsa:1437"/>
<dbReference type="MANE-Select" id="ENST00000296871.4">
    <property type="protein sequence ID" value="ENSP00000296871.2"/>
    <property type="RefSeq nucleotide sequence ID" value="NM_000758.4"/>
    <property type="RefSeq protein sequence ID" value="NP_000749.2"/>
</dbReference>
<dbReference type="UCSC" id="uc003kwf.5">
    <property type="organism name" value="human"/>
</dbReference>
<dbReference type="AGR" id="HGNC:2434"/>
<dbReference type="CTD" id="1437"/>
<dbReference type="DisGeNET" id="1437"/>
<dbReference type="GeneCards" id="CSF2"/>
<dbReference type="HGNC" id="HGNC:2434">
    <property type="gene designation" value="CSF2"/>
</dbReference>
<dbReference type="HPA" id="ENSG00000164400">
    <property type="expression patterns" value="Tissue enhanced (lung)"/>
</dbReference>
<dbReference type="MalaCards" id="CSF2"/>
<dbReference type="MIM" id="138960">
    <property type="type" value="gene"/>
</dbReference>
<dbReference type="neXtProt" id="NX_P04141"/>
<dbReference type="OpenTargets" id="ENSG00000164400"/>
<dbReference type="PharmGKB" id="PA26937"/>
<dbReference type="VEuPathDB" id="HostDB:ENSG00000164400"/>
<dbReference type="eggNOG" id="ENOG502TDUI">
    <property type="taxonomic scope" value="Eukaryota"/>
</dbReference>
<dbReference type="GeneTree" id="ENSGT00390000013425"/>
<dbReference type="HOGENOM" id="CLU_152286_0_0_1"/>
<dbReference type="InParanoid" id="P04141"/>
<dbReference type="OMA" id="SCETQII"/>
<dbReference type="OrthoDB" id="9633166at2759"/>
<dbReference type="PAN-GO" id="P04141">
    <property type="GO annotations" value="3 GO annotations based on evolutionary models"/>
</dbReference>
<dbReference type="PhylomeDB" id="P04141"/>
<dbReference type="TreeFam" id="TF338611"/>
<dbReference type="PathwayCommons" id="P04141"/>
<dbReference type="Reactome" id="R-HSA-512988">
    <property type="pathway name" value="Interleukin-3, Interleukin-5 and GM-CSF signaling"/>
</dbReference>
<dbReference type="Reactome" id="R-HSA-5673001">
    <property type="pathway name" value="RAF/MAP kinase cascade"/>
</dbReference>
<dbReference type="Reactome" id="R-HSA-6783783">
    <property type="pathway name" value="Interleukin-10 signaling"/>
</dbReference>
<dbReference type="Reactome" id="R-HSA-8939246">
    <property type="pathway name" value="RUNX1 regulates transcription of genes involved in differentiation of myeloid cells"/>
</dbReference>
<dbReference type="Reactome" id="R-HSA-912526">
    <property type="pathway name" value="Interleukin receptor SHC signaling"/>
</dbReference>
<dbReference type="SignaLink" id="P04141"/>
<dbReference type="SIGNOR" id="P04141"/>
<dbReference type="BioGRID-ORCS" id="1437">
    <property type="hits" value="23 hits in 1146 CRISPR screens"/>
</dbReference>
<dbReference type="ChiTaRS" id="CSF2">
    <property type="organism name" value="human"/>
</dbReference>
<dbReference type="EvolutionaryTrace" id="P04141"/>
<dbReference type="GeneWiki" id="Granulocyte_macrophage_colony-stimulating_factor"/>
<dbReference type="GenomeRNAi" id="1437"/>
<dbReference type="Pharos" id="P04141">
    <property type="development level" value="Tbio"/>
</dbReference>
<dbReference type="PRO" id="PR:P04141"/>
<dbReference type="Proteomes" id="UP000005640">
    <property type="component" value="Chromosome 5"/>
</dbReference>
<dbReference type="RNAct" id="P04141">
    <property type="molecule type" value="protein"/>
</dbReference>
<dbReference type="Bgee" id="ENSG00000164400">
    <property type="expression patterns" value="Expressed in cartilage tissue and 62 other cell types or tissues"/>
</dbReference>
<dbReference type="GO" id="GO:0005576">
    <property type="term" value="C:extracellular region"/>
    <property type="evidence" value="ECO:0000304"/>
    <property type="project" value="Reactome"/>
</dbReference>
<dbReference type="GO" id="GO:0005615">
    <property type="term" value="C:extracellular space"/>
    <property type="evidence" value="ECO:0000314"/>
    <property type="project" value="UniProtKB"/>
</dbReference>
<dbReference type="GO" id="GO:0030526">
    <property type="term" value="C:granulocyte macrophage colony-stimulating factor receptor complex"/>
    <property type="evidence" value="ECO:0000314"/>
    <property type="project" value="ComplexPortal"/>
</dbReference>
<dbReference type="GO" id="GO:0043231">
    <property type="term" value="C:intracellular membrane-bounded organelle"/>
    <property type="evidence" value="ECO:0000314"/>
    <property type="project" value="HPA"/>
</dbReference>
<dbReference type="GO" id="GO:0005886">
    <property type="term" value="C:plasma membrane"/>
    <property type="evidence" value="ECO:0000303"/>
    <property type="project" value="ComplexPortal"/>
</dbReference>
<dbReference type="GO" id="GO:0005125">
    <property type="term" value="F:cytokine activity"/>
    <property type="evidence" value="ECO:0000314"/>
    <property type="project" value="UniProtKB"/>
</dbReference>
<dbReference type="GO" id="GO:0005129">
    <property type="term" value="F:granulocyte macrophage colony-stimulating factor receptor binding"/>
    <property type="evidence" value="ECO:0000304"/>
    <property type="project" value="ProtInc"/>
</dbReference>
<dbReference type="GO" id="GO:0008083">
    <property type="term" value="F:growth factor activity"/>
    <property type="evidence" value="ECO:0007669"/>
    <property type="project" value="UniProtKB-KW"/>
</dbReference>
<dbReference type="GO" id="GO:0008283">
    <property type="term" value="P:cell population proliferation"/>
    <property type="evidence" value="ECO:0007669"/>
    <property type="project" value="Ensembl"/>
</dbReference>
<dbReference type="GO" id="GO:0007259">
    <property type="term" value="P:cell surface receptor signaling pathway via JAK-STAT"/>
    <property type="evidence" value="ECO:0000314"/>
    <property type="project" value="ComplexPortal"/>
</dbReference>
<dbReference type="GO" id="GO:0097696">
    <property type="term" value="P:cell surface receptor signaling pathway via STAT"/>
    <property type="evidence" value="ECO:0000314"/>
    <property type="project" value="BHF-UCL"/>
</dbReference>
<dbReference type="GO" id="GO:0097011">
    <property type="term" value="P:cellular response to granulocyte macrophage colony-stimulating factor stimulus"/>
    <property type="evidence" value="ECO:0000314"/>
    <property type="project" value="CAFA"/>
</dbReference>
<dbReference type="GO" id="GO:0071222">
    <property type="term" value="P:cellular response to lipopolysaccharide"/>
    <property type="evidence" value="ECO:0007669"/>
    <property type="project" value="Ensembl"/>
</dbReference>
<dbReference type="GO" id="GO:0097028">
    <property type="term" value="P:dendritic cell differentiation"/>
    <property type="evidence" value="ECO:0000314"/>
    <property type="project" value="DFLAT"/>
</dbReference>
<dbReference type="GO" id="GO:0001892">
    <property type="term" value="P:embryonic placenta development"/>
    <property type="evidence" value="ECO:0007669"/>
    <property type="project" value="Ensembl"/>
</dbReference>
<dbReference type="GO" id="GO:0042045">
    <property type="term" value="P:epithelial fluid transport"/>
    <property type="evidence" value="ECO:0007669"/>
    <property type="project" value="Ensembl"/>
</dbReference>
<dbReference type="GO" id="GO:0038157">
    <property type="term" value="P:granulocyte-macrophage colony-stimulating factor signaling pathway"/>
    <property type="evidence" value="ECO:0000314"/>
    <property type="project" value="BHF-UCL"/>
</dbReference>
<dbReference type="GO" id="GO:0001821">
    <property type="term" value="P:histamine secretion"/>
    <property type="evidence" value="ECO:0007669"/>
    <property type="project" value="Ensembl"/>
</dbReference>
<dbReference type="GO" id="GO:0006955">
    <property type="term" value="P:immune response"/>
    <property type="evidence" value="ECO:0007669"/>
    <property type="project" value="InterPro"/>
</dbReference>
<dbReference type="GO" id="GO:0030225">
    <property type="term" value="P:macrophage differentiation"/>
    <property type="evidence" value="ECO:0000314"/>
    <property type="project" value="ARUK-UCL"/>
</dbReference>
<dbReference type="GO" id="GO:0030224">
    <property type="term" value="P:monocyte differentiation"/>
    <property type="evidence" value="ECO:0007669"/>
    <property type="project" value="Ensembl"/>
</dbReference>
<dbReference type="GO" id="GO:0030099">
    <property type="term" value="P:myeloid cell differentiation"/>
    <property type="evidence" value="ECO:0000318"/>
    <property type="project" value="GO_Central"/>
</dbReference>
<dbReference type="GO" id="GO:0043011">
    <property type="term" value="P:myeloid dendritic cell differentiation"/>
    <property type="evidence" value="ECO:0000314"/>
    <property type="project" value="UniProtKB"/>
</dbReference>
<dbReference type="GO" id="GO:0045892">
    <property type="term" value="P:negative regulation of DNA-templated transcription"/>
    <property type="evidence" value="ECO:0000314"/>
    <property type="project" value="UniProtKB"/>
</dbReference>
<dbReference type="GO" id="GO:2001240">
    <property type="term" value="P:negative regulation of extrinsic apoptotic signaling pathway in absence of ligand"/>
    <property type="evidence" value="ECO:0000314"/>
    <property type="project" value="BHF-UCL"/>
</dbReference>
<dbReference type="GO" id="GO:0030223">
    <property type="term" value="P:neutrophil differentiation"/>
    <property type="evidence" value="ECO:0007669"/>
    <property type="project" value="Ensembl"/>
</dbReference>
<dbReference type="GO" id="GO:0030335">
    <property type="term" value="P:positive regulation of cell migration"/>
    <property type="evidence" value="ECO:0007669"/>
    <property type="project" value="Ensembl"/>
</dbReference>
<dbReference type="GO" id="GO:0008284">
    <property type="term" value="P:positive regulation of cell population proliferation"/>
    <property type="evidence" value="ECO:0000314"/>
    <property type="project" value="BHF-UCL"/>
</dbReference>
<dbReference type="GO" id="GO:0010628">
    <property type="term" value="P:positive regulation of gene expression"/>
    <property type="evidence" value="ECO:0000314"/>
    <property type="project" value="BHF-UCL"/>
</dbReference>
<dbReference type="GO" id="GO:0032747">
    <property type="term" value="P:positive regulation of interleukin-23 production"/>
    <property type="evidence" value="ECO:0000314"/>
    <property type="project" value="BHF-UCL"/>
</dbReference>
<dbReference type="GO" id="GO:0070665">
    <property type="term" value="P:positive regulation of leukocyte proliferation"/>
    <property type="evidence" value="ECO:0000314"/>
    <property type="project" value="ComplexPortal"/>
</dbReference>
<dbReference type="GO" id="GO:0010744">
    <property type="term" value="P:positive regulation of macrophage derived foam cell differentiation"/>
    <property type="evidence" value="ECO:0000314"/>
    <property type="project" value="BHF-UCL"/>
</dbReference>
<dbReference type="GO" id="GO:0071803">
    <property type="term" value="P:positive regulation of podosome assembly"/>
    <property type="evidence" value="ECO:0000314"/>
    <property type="project" value="BHF-UCL"/>
</dbReference>
<dbReference type="GO" id="GO:0045187">
    <property type="term" value="P:regulation of circadian sleep/wake cycle, sleep"/>
    <property type="evidence" value="ECO:0007669"/>
    <property type="project" value="Ensembl"/>
</dbReference>
<dbReference type="GO" id="GO:0034405">
    <property type="term" value="P:response to fluid shear stress"/>
    <property type="evidence" value="ECO:0007669"/>
    <property type="project" value="Ensembl"/>
</dbReference>
<dbReference type="GO" id="GO:0034021">
    <property type="term" value="P:response to silicon dioxide"/>
    <property type="evidence" value="ECO:0007669"/>
    <property type="project" value="Ensembl"/>
</dbReference>
<dbReference type="CDD" id="cd00040">
    <property type="entry name" value="CSF2"/>
    <property type="match status" value="1"/>
</dbReference>
<dbReference type="FunFam" id="1.20.1250.10:FF:000028">
    <property type="entry name" value="Granulocyte-macrophage colony-stimulating factor"/>
    <property type="match status" value="1"/>
</dbReference>
<dbReference type="Gene3D" id="1.20.1250.10">
    <property type="match status" value="1"/>
</dbReference>
<dbReference type="InterPro" id="IPR009079">
    <property type="entry name" value="4_helix_cytokine-like_core"/>
</dbReference>
<dbReference type="InterPro" id="IPR000773">
    <property type="entry name" value="GM_colony-stim-fac"/>
</dbReference>
<dbReference type="PANTHER" id="PTHR10059:SF0">
    <property type="entry name" value="GRANULOCYTE-MACROPHAGE COLONY-STIMULATING FACTOR"/>
    <property type="match status" value="1"/>
</dbReference>
<dbReference type="PANTHER" id="PTHR10059">
    <property type="entry name" value="GRANULOCYTE-MACROPHAGE COLONY-STIMULATING FACTOR GM-CSF"/>
    <property type="match status" value="1"/>
</dbReference>
<dbReference type="Pfam" id="PF01109">
    <property type="entry name" value="GM_CSF"/>
    <property type="match status" value="1"/>
</dbReference>
<dbReference type="PRINTS" id="PR00693">
    <property type="entry name" value="GMCSFACTOR"/>
</dbReference>
<dbReference type="SMART" id="SM00040">
    <property type="entry name" value="CSF2"/>
    <property type="match status" value="1"/>
</dbReference>
<dbReference type="SUPFAM" id="SSF47266">
    <property type="entry name" value="4-helical cytokines"/>
    <property type="match status" value="1"/>
</dbReference>
<dbReference type="PROSITE" id="PS00702">
    <property type="entry name" value="GM_CSF"/>
    <property type="match status" value="1"/>
</dbReference>
<organism>
    <name type="scientific">Homo sapiens</name>
    <name type="common">Human</name>
    <dbReference type="NCBI Taxonomy" id="9606"/>
    <lineage>
        <taxon>Eukaryota</taxon>
        <taxon>Metazoa</taxon>
        <taxon>Chordata</taxon>
        <taxon>Craniata</taxon>
        <taxon>Vertebrata</taxon>
        <taxon>Euteleostomi</taxon>
        <taxon>Mammalia</taxon>
        <taxon>Eutheria</taxon>
        <taxon>Euarchontoglires</taxon>
        <taxon>Primates</taxon>
        <taxon>Haplorrhini</taxon>
        <taxon>Catarrhini</taxon>
        <taxon>Hominidae</taxon>
        <taxon>Homo</taxon>
    </lineage>
</organism>
<protein>
    <recommendedName>
        <fullName>Granulocyte-macrophage colony-stimulating factor</fullName>
        <shortName>GM-CSF</shortName>
    </recommendedName>
    <alternativeName>
        <fullName>Colony-stimulating factor</fullName>
        <shortName>CSF</shortName>
    </alternativeName>
    <alternativeName>
        <fullName>Molgramostin</fullName>
    </alternativeName>
    <alternativeName>
        <fullName>Sargramostim</fullName>
    </alternativeName>
</protein>
<feature type="signal peptide">
    <location>
        <begin position="1"/>
        <end position="17"/>
    </location>
</feature>
<feature type="chain" id="PRO_0000005865" description="Granulocyte-macrophage colony-stimulating factor">
    <location>
        <begin position="18"/>
        <end position="144"/>
    </location>
</feature>
<feature type="glycosylation site" description="O-linked (GalNAc...) serine" evidence="3">
    <location>
        <position position="22"/>
    </location>
</feature>
<feature type="glycosylation site" description="O-linked (GalNAc...) serine" evidence="3">
    <location>
        <position position="24"/>
    </location>
</feature>
<feature type="glycosylation site" description="O-linked (GalNAc...) serine" evidence="3">
    <location>
        <position position="26"/>
    </location>
</feature>
<feature type="glycosylation site" description="O-linked (GalNAc...) threonine; partial" evidence="3">
    <location>
        <position position="27"/>
    </location>
</feature>
<feature type="glycosylation site" description="N-linked (GlcNAc...) asparagine">
    <location>
        <position position="44"/>
    </location>
</feature>
<feature type="glycosylation site" description="N-linked (GlcNAc...) asparagine">
    <location>
        <position position="54"/>
    </location>
</feature>
<feature type="disulfide bond" evidence="2 4 9 10 11 12 13">
    <location>
        <begin position="71"/>
        <end position="113"/>
    </location>
</feature>
<feature type="disulfide bond" evidence="2 4 9 10 11 12 13">
    <location>
        <begin position="105"/>
        <end position="138"/>
    </location>
</feature>
<feature type="sequence variant" id="VAR_013089" description="In dbSNP:rs2069640." evidence="6">
    <original>T</original>
    <variation>I</variation>
    <location>
        <position position="115"/>
    </location>
</feature>
<feature type="sequence variant" id="VAR_001975" description="In dbSNP:rs25882." evidence="1 6 7">
    <original>I</original>
    <variation>T</variation>
    <location>
        <position position="117"/>
    </location>
</feature>
<feature type="sequence conflict" description="In Ref. 9; AAM44054." evidence="8" ref="9">
    <original>M</original>
    <variation>K</variation>
    <location>
        <position position="96"/>
    </location>
</feature>
<feature type="sequence conflict" description="In Ref. 9; AAM44054." evidence="8" ref="9">
    <original>F</original>
    <variation>L</variation>
    <location>
        <position position="123"/>
    </location>
</feature>
<feature type="turn" evidence="14">
    <location>
        <begin position="25"/>
        <end position="27"/>
    </location>
</feature>
<feature type="turn" evidence="15">
    <location>
        <begin position="29"/>
        <end position="31"/>
    </location>
</feature>
<feature type="helix" evidence="16">
    <location>
        <begin position="32"/>
        <end position="45"/>
    </location>
</feature>
<feature type="turn" evidence="16">
    <location>
        <begin position="50"/>
        <end position="52"/>
    </location>
</feature>
<feature type="strand" evidence="16">
    <location>
        <begin position="56"/>
        <end position="62"/>
    </location>
</feature>
<feature type="strand" evidence="15">
    <location>
        <begin position="66"/>
        <end position="68"/>
    </location>
</feature>
<feature type="helix" evidence="16">
    <location>
        <begin position="72"/>
        <end position="82"/>
    </location>
</feature>
<feature type="helix" evidence="16">
    <location>
        <begin position="85"/>
        <end position="90"/>
    </location>
</feature>
<feature type="helix" evidence="16">
    <location>
        <begin position="91"/>
        <end position="104"/>
    </location>
</feature>
<feature type="strand" evidence="16">
    <location>
        <begin position="115"/>
        <end position="119"/>
    </location>
</feature>
<feature type="helix" evidence="16">
    <location>
        <begin position="120"/>
        <end position="133"/>
    </location>
</feature>
<reference key="1">
    <citation type="journal article" date="1985" name="Proc. Natl. Acad. Sci. U.S.A.">
        <title>Isolation of cDNA for a human granulocyte-macrophage colony-stimulating factor by functional expression in mammalian cells.</title>
        <authorList>
            <person name="Lee F."/>
            <person name="Yokota T."/>
            <person name="Otsuka T."/>
            <person name="Gemmell L."/>
            <person name="Larson N."/>
            <person name="Luh J."/>
            <person name="Arai K."/>
            <person name="Rennick D."/>
        </authorList>
    </citation>
    <scope>NUCLEOTIDE SEQUENCE [MRNA]</scope>
    <scope>FUNCTION</scope>
    <scope>SUBCELLULAR LOCATION</scope>
</reference>
<reference key="2">
    <citation type="journal article" date="1986" name="Proc. Natl. Acad. Sci. U.S.A.">
        <title>Genomic cloning, characterization, and multilineage growth-promoting activity of human granulocyte-macrophage colony-stimulating factor.</title>
        <authorList>
            <person name="Kaushansky K."/>
            <person name="O'Hara P.J."/>
            <person name="Berkner K."/>
            <person name="Segal G.M."/>
            <person name="Hagen F.S."/>
            <person name="Adamson J.W."/>
        </authorList>
    </citation>
    <scope>NUCLEOTIDE SEQUENCE [GENOMIC DNA]</scope>
</reference>
<reference key="3">
    <citation type="journal article" date="1985" name="Proc. Natl. Acad. Sci. U.S.A.">
        <title>Cloning, sequence, and expression of a human granulocyte/macrophage colony-stimulating factor.</title>
        <authorList>
            <person name="Cantrell M.A."/>
            <person name="Anderson D."/>
            <person name="Cerretti D.P."/>
            <person name="Price V."/>
            <person name="McKereghan K."/>
            <person name="Tushinski R.J."/>
            <person name="Mochizuki D.Y."/>
            <person name="Larsen A."/>
            <person name="Grabstein S."/>
            <person name="Gillis S."/>
            <person name="Cosman D."/>
        </authorList>
    </citation>
    <scope>NUCLEOTIDE SEQUENCE [MRNA]</scope>
</reference>
<reference key="4">
    <citation type="journal article" date="1985" name="Science">
        <title>Human GM-CSF: molecular cloning of the complementary DNA and purification of the natural and recombinant proteins.</title>
        <authorList>
            <person name="Wong G.G."/>
            <person name="Witek J.S."/>
            <person name="Temple P.A."/>
            <person name="Wilkens K.M."/>
            <person name="Leary A.C."/>
            <person name="Luxenberg D.P."/>
            <person name="Jones S.S."/>
            <person name="Brown E.L."/>
            <person name="Kay R.M."/>
            <person name="Orr E.C."/>
            <person name="Shoemaker C."/>
            <person name="Golde D.W."/>
            <person name="Kaufman R.J."/>
            <person name="Hewick R.M."/>
            <person name="Wang E.A."/>
            <person name="Clark S.C."/>
        </authorList>
    </citation>
    <scope>NUCLEOTIDE SEQUENCE [MRNA]</scope>
</reference>
<reference key="5">
    <citation type="journal article" date="1985" name="EMBO J.">
        <title>Structure of the chromosomal gene for granulocyte-macrophage colony stimulating factor: comparison of the mouse and human genes.</title>
        <authorList>
            <person name="Miyatake S."/>
            <person name="Otsuka T."/>
            <person name="Yokota T."/>
            <person name="Lee F."/>
            <person name="Arai K."/>
        </authorList>
    </citation>
    <scope>NUCLEOTIDE SEQUENCE [GENOMIC DNA]</scope>
</reference>
<reference key="6">
    <citation type="submission" date="2001-06" db="EMBL/GenBank/DDBJ databases">
        <authorList>
            <consortium name="SeattleSNPs variation discovery resource"/>
        </authorList>
    </citation>
    <scope>NUCLEOTIDE SEQUENCE [GENOMIC DNA]</scope>
    <scope>VARIANTS ILE-115 AND THR-117</scope>
</reference>
<reference key="7">
    <citation type="journal article" date="2004" name="Nature">
        <title>The DNA sequence and comparative analysis of human chromosome 5.</title>
        <authorList>
            <person name="Schmutz J."/>
            <person name="Martin J."/>
            <person name="Terry A."/>
            <person name="Couronne O."/>
            <person name="Grimwood J."/>
            <person name="Lowry S."/>
            <person name="Gordon L.A."/>
            <person name="Scott D."/>
            <person name="Xie G."/>
            <person name="Huang W."/>
            <person name="Hellsten U."/>
            <person name="Tran-Gyamfi M."/>
            <person name="She X."/>
            <person name="Prabhakar S."/>
            <person name="Aerts A."/>
            <person name="Altherr M."/>
            <person name="Bajorek E."/>
            <person name="Black S."/>
            <person name="Branscomb E."/>
            <person name="Caoile C."/>
            <person name="Challacombe J.F."/>
            <person name="Chan Y.M."/>
            <person name="Denys M."/>
            <person name="Detter J.C."/>
            <person name="Escobar J."/>
            <person name="Flowers D."/>
            <person name="Fotopulos D."/>
            <person name="Glavina T."/>
            <person name="Gomez M."/>
            <person name="Gonzales E."/>
            <person name="Goodstein D."/>
            <person name="Grigoriev I."/>
            <person name="Groza M."/>
            <person name="Hammon N."/>
            <person name="Hawkins T."/>
            <person name="Haydu L."/>
            <person name="Israni S."/>
            <person name="Jett J."/>
            <person name="Kadner K."/>
            <person name="Kimball H."/>
            <person name="Kobayashi A."/>
            <person name="Lopez F."/>
            <person name="Lou Y."/>
            <person name="Martinez D."/>
            <person name="Medina C."/>
            <person name="Morgan J."/>
            <person name="Nandkeshwar R."/>
            <person name="Noonan J.P."/>
            <person name="Pitluck S."/>
            <person name="Pollard M."/>
            <person name="Predki P."/>
            <person name="Priest J."/>
            <person name="Ramirez L."/>
            <person name="Retterer J."/>
            <person name="Rodriguez A."/>
            <person name="Rogers S."/>
            <person name="Salamov A."/>
            <person name="Salazar A."/>
            <person name="Thayer N."/>
            <person name="Tice H."/>
            <person name="Tsai M."/>
            <person name="Ustaszewska A."/>
            <person name="Vo N."/>
            <person name="Wheeler J."/>
            <person name="Wu K."/>
            <person name="Yang J."/>
            <person name="Dickson M."/>
            <person name="Cheng J.-F."/>
            <person name="Eichler E.E."/>
            <person name="Olsen A."/>
            <person name="Pennacchio L.A."/>
            <person name="Rokhsar D.S."/>
            <person name="Richardson P."/>
            <person name="Lucas S.M."/>
            <person name="Myers R.M."/>
            <person name="Rubin E.M."/>
        </authorList>
    </citation>
    <scope>NUCLEOTIDE SEQUENCE [LARGE SCALE GENOMIC DNA]</scope>
</reference>
<reference key="8">
    <citation type="journal article" date="2004" name="Genome Res.">
        <title>The status, quality, and expansion of the NIH full-length cDNA project: the Mammalian Gene Collection (MGC).</title>
        <authorList>
            <consortium name="The MGC Project Team"/>
        </authorList>
    </citation>
    <scope>NUCLEOTIDE SEQUENCE [LARGE SCALE MRNA]</scope>
    <scope>VARIANT THR-117</scope>
</reference>
<reference key="9">
    <citation type="submission" date="2002-05" db="EMBL/GenBank/DDBJ databases">
        <authorList>
            <person name="Bhattacharya P."/>
            <person name="Pandey G."/>
            <person name="Mukherjee K.J."/>
        </authorList>
    </citation>
    <scope>NUCLEOTIDE SEQUENCE [MRNA] OF 18-144</scope>
    <scope>VARIANT THR-117</scope>
    <source>
        <tissue>Peripheral blood</tissue>
    </source>
</reference>
<reference key="10">
    <citation type="journal article" date="1992" name="Biochemistry">
        <title>Role of carbohydrate modification in the production and secretion of human granulocyte macrophage colony-stimulating factor in genetically engineered and normal mesenchymal cells.</title>
        <authorList>
            <person name="Kaushansky K."/>
            <person name="Lopez J.A."/>
            <person name="Brown C.B."/>
        </authorList>
    </citation>
    <scope>GLYCOSYLATION AT SER-22; SER-24; SER-26 AND THR-27</scope>
    <scope>SUBCELLULAR LOCATION</scope>
</reference>
<reference key="11">
    <citation type="journal article" date="1991" name="Science">
        <title>Novel fold and putative receptor binding site of granulocyte-macrophage colony-stimulating factor.</title>
        <authorList>
            <person name="Diederichs K."/>
            <person name="Boone T."/>
            <person name="Karplus P.A."/>
        </authorList>
    </citation>
    <scope>X-RAY CRYSTALLOGRAPHY (2.4 ANGSTROMS)</scope>
</reference>
<reference key="12">
    <citation type="journal article" date="1992" name="J. Mol. Biol.">
        <title>Three-dimensional structure of recombinant human granulocyte-macrophage colony-stimulating factor.</title>
        <authorList>
            <person name="Walter M.R."/>
            <person name="Cook W.J."/>
            <person name="Ealick S.E."/>
            <person name="Nagabhushan T.L."/>
            <person name="Trotta P.P."/>
            <person name="Bugg C.E."/>
        </authorList>
    </citation>
    <scope>X-RAY CRYSTALLOGRAPHY (2.70 ANGSTROMS) OF 18-144</scope>
    <scope>DISULFIDE BONDS</scope>
</reference>
<reference key="13">
    <citation type="journal article" date="2008" name="Cell">
        <title>The structure of the GM-CSF receptor complex reveals a distinct mode of cytokine receptor activation.</title>
        <authorList>
            <person name="Hansen G."/>
            <person name="Hercus T.R."/>
            <person name="McClure B.J."/>
            <person name="Stomski F.C."/>
            <person name="Dottore M."/>
            <person name="Powell J."/>
            <person name="Ramshaw H."/>
            <person name="Woodcock J.M."/>
            <person name="Xu Y."/>
            <person name="Guthridge M."/>
            <person name="McKinstry W.J."/>
            <person name="Lopez A.F."/>
            <person name="Parker M.W."/>
        </authorList>
    </citation>
    <scope>X-RAY CRYSTALLOGRAPHY (3.3 ANGSTROMS) OF 18-144 IN COMPLEX WITH CSF2RA AND CSF2RB</scope>
    <scope>SUBUNIT</scope>
    <scope>DISULFIDE BOND</scope>
</reference>
<evidence type="ECO:0000269" key="1">
    <source>
    </source>
</evidence>
<evidence type="ECO:0000269" key="2">
    <source>
    </source>
</evidence>
<evidence type="ECO:0000269" key="3">
    <source>
    </source>
</evidence>
<evidence type="ECO:0000269" key="4">
    <source>
    </source>
</evidence>
<evidence type="ECO:0000269" key="5">
    <source>
    </source>
</evidence>
<evidence type="ECO:0000269" key="6">
    <source ref="6"/>
</evidence>
<evidence type="ECO:0000269" key="7">
    <source ref="9"/>
</evidence>
<evidence type="ECO:0000305" key="8"/>
<evidence type="ECO:0007744" key="9">
    <source>
        <dbReference type="PDB" id="1CSG"/>
    </source>
</evidence>
<evidence type="ECO:0007744" key="10">
    <source>
        <dbReference type="PDB" id="2GMF"/>
    </source>
</evidence>
<evidence type="ECO:0007744" key="11">
    <source>
        <dbReference type="PDB" id="4RS1"/>
    </source>
</evidence>
<evidence type="ECO:0007744" key="12">
    <source>
        <dbReference type="PDB" id="5C7X"/>
    </source>
</evidence>
<evidence type="ECO:0007744" key="13">
    <source>
        <dbReference type="PDB" id="5D70"/>
    </source>
</evidence>
<evidence type="ECO:0007829" key="14">
    <source>
        <dbReference type="PDB" id="2GMF"/>
    </source>
</evidence>
<evidence type="ECO:0007829" key="15">
    <source>
        <dbReference type="PDB" id="5D70"/>
    </source>
</evidence>
<evidence type="ECO:0007829" key="16">
    <source>
        <dbReference type="PDB" id="6BFS"/>
    </source>
</evidence>
<proteinExistence type="evidence at protein level"/>
<sequence>MWLQSLLLLGTVACSISAPARSPSPSTQPWEHVNAIQEARRLLNLSRDTAAEMNETVEVISEMFDLQEPTCLQTRLELYKQGLRGSLTKLKGPLTMMASHYKQHCPPTPETSCATQIITFESFKENLKDFLLVIPFDCWEPVQE</sequence>
<keyword id="KW-0002">3D-structure</keyword>
<keyword id="KW-0202">Cytokine</keyword>
<keyword id="KW-1015">Disulfide bond</keyword>
<keyword id="KW-0325">Glycoprotein</keyword>
<keyword id="KW-0339">Growth factor</keyword>
<keyword id="KW-0582">Pharmaceutical</keyword>
<keyword id="KW-1267">Proteomics identification</keyword>
<keyword id="KW-1185">Reference proteome</keyword>
<keyword id="KW-0964">Secreted</keyword>
<keyword id="KW-0732">Signal</keyword>
<comment type="function">
    <text evidence="5">Cytokine that stimulates the growth and differentiation of hematopoietic precursor cells from various lineages, including granulocytes, macrophages, eosinophils and erythrocytes.</text>
</comment>
<comment type="subunit">
    <text evidence="4">Monomer. The signaling GM-CSF receptor complex is a dodecamer of two head-to-head hexamers of two alpha, two beta, and two ligand subunits.</text>
</comment>
<comment type="interaction">
    <interactant intactId="EBI-1809826">
        <id>P04141</id>
    </interactant>
    <interactant intactId="EBI-640741">
        <id>P01023</id>
        <label>A2M</label>
    </interactant>
    <organismsDiffer>false</organismsDiffer>
    <experiments>3</experiments>
</comment>
<comment type="interaction">
    <interactant intactId="EBI-1809826">
        <id>P04141</id>
    </interactant>
    <interactant intactId="EBI-1809771">
        <id>P32927</id>
        <label>CSF2RB</label>
    </interactant>
    <organismsDiffer>false</organismsDiffer>
    <experiments>2</experiments>
</comment>
<comment type="interaction">
    <interactant intactId="EBI-1809826">
        <id>P04141</id>
    </interactant>
    <interactant intactId="EBI-10968534">
        <id>P50570-2</id>
        <label>DNM2</label>
    </interactant>
    <organismsDiffer>false</organismsDiffer>
    <experiments>3</experiments>
</comment>
<comment type="interaction">
    <interactant intactId="EBI-1809826">
        <id>P04141</id>
    </interactant>
    <interactant intactId="EBI-466029">
        <id>P42858</id>
        <label>HTT</label>
    </interactant>
    <organismsDiffer>false</organismsDiffer>
    <experiments>15</experiments>
</comment>
<comment type="interaction">
    <interactant intactId="EBI-1809826">
        <id>P04141</id>
    </interactant>
    <interactant intactId="EBI-748397">
        <id>P50222</id>
        <label>MEOX2</label>
    </interactant>
    <organismsDiffer>false</organismsDiffer>
    <experiments>6</experiments>
</comment>
<comment type="subcellular location">
    <subcellularLocation>
        <location evidence="3 5">Secreted</location>
    </subcellularLocation>
</comment>
<comment type="polymorphism">
    <text>Variant Ile-117 may be a risk factor for atopic asthma.</text>
</comment>
<comment type="pharmaceutical">
    <text>Available under the names Leukine (Immunex) and Leucomax (Novartis). Used in myeloid reconstitution following bone marrow transplant, bone marrow transplant engraftment failure or delay, mobilization and following transplantation of autologous peripheral blood progenitor cells, and following induction chemotherapy in older adults with acute myelogenous leukemia.</text>
</comment>
<comment type="similarity">
    <text evidence="8">Belongs to the GM-CSF family.</text>
</comment>
<comment type="online information" name="Leukine">
    <link uri="https://www.leukine.com/"/>
    <text>Clinical information on Leukine</text>
</comment>
<accession>P04141</accession>
<accession>Q14CE8</accession>
<accession>Q2VPI8</accession>
<accession>Q8NFI6</accession>
<name>CSF2_HUMAN</name>